<evidence type="ECO:0000250" key="1"/>
<evidence type="ECO:0000255" key="2"/>
<evidence type="ECO:0000255" key="3">
    <source>
        <dbReference type="PROSITE-ProRule" id="PRU00143"/>
    </source>
</evidence>
<evidence type="ECO:0000305" key="4"/>
<dbReference type="EC" id="3.4.21.107"/>
<dbReference type="EMBL" id="L20127">
    <property type="protein sequence ID" value="AAA97430.1"/>
    <property type="molecule type" value="Genomic_DNA"/>
</dbReference>
<dbReference type="EMBL" id="BX897699">
    <property type="protein sequence ID" value="CAF27285.1"/>
    <property type="molecule type" value="Genomic_DNA"/>
</dbReference>
<dbReference type="RefSeq" id="WP_011180408.1">
    <property type="nucleotide sequence ID" value="NZ_LRIJ02000001.1"/>
</dbReference>
<dbReference type="SMR" id="P54925"/>
<dbReference type="PaxDb" id="283166-BH04770"/>
<dbReference type="EnsemblBacteria" id="CAF27285">
    <property type="protein sequence ID" value="CAF27285"/>
    <property type="gene ID" value="BH04770"/>
</dbReference>
<dbReference type="KEGG" id="bhe:BH04770"/>
<dbReference type="eggNOG" id="COG0265">
    <property type="taxonomic scope" value="Bacteria"/>
</dbReference>
<dbReference type="OrthoDB" id="7358927at2"/>
<dbReference type="Proteomes" id="UP000000421">
    <property type="component" value="Chromosome"/>
</dbReference>
<dbReference type="GO" id="GO:0030288">
    <property type="term" value="C:outer membrane-bounded periplasmic space"/>
    <property type="evidence" value="ECO:0000250"/>
    <property type="project" value="UniProtKB"/>
</dbReference>
<dbReference type="GO" id="GO:0004252">
    <property type="term" value="F:serine-type endopeptidase activity"/>
    <property type="evidence" value="ECO:0000250"/>
    <property type="project" value="UniProtKB"/>
</dbReference>
<dbReference type="GO" id="GO:0006508">
    <property type="term" value="P:proteolysis"/>
    <property type="evidence" value="ECO:0007669"/>
    <property type="project" value="UniProtKB-KW"/>
</dbReference>
<dbReference type="CDD" id="cd10839">
    <property type="entry name" value="cpPDZ1_DegP-like"/>
    <property type="match status" value="1"/>
</dbReference>
<dbReference type="CDD" id="cd23084">
    <property type="entry name" value="cpPDZ2_DegP-like"/>
    <property type="match status" value="1"/>
</dbReference>
<dbReference type="FunFam" id="2.30.42.10:FF:000037">
    <property type="entry name" value="Periplasmic serine endoprotease DegP-like"/>
    <property type="match status" value="1"/>
</dbReference>
<dbReference type="FunFam" id="2.30.42.10:FF:000197">
    <property type="entry name" value="Periplasmic serine endoprotease DegP-like"/>
    <property type="match status" value="1"/>
</dbReference>
<dbReference type="FunFam" id="2.40.10.120:FF:000007">
    <property type="entry name" value="Periplasmic serine endoprotease DegP-like"/>
    <property type="match status" value="1"/>
</dbReference>
<dbReference type="Gene3D" id="2.30.42.10">
    <property type="match status" value="2"/>
</dbReference>
<dbReference type="Gene3D" id="2.40.10.120">
    <property type="match status" value="1"/>
</dbReference>
<dbReference type="InterPro" id="IPR001478">
    <property type="entry name" value="PDZ"/>
</dbReference>
<dbReference type="InterPro" id="IPR041489">
    <property type="entry name" value="PDZ_6"/>
</dbReference>
<dbReference type="InterPro" id="IPR036034">
    <property type="entry name" value="PDZ_sf"/>
</dbReference>
<dbReference type="InterPro" id="IPR011782">
    <property type="entry name" value="Pept_S1C_Do"/>
</dbReference>
<dbReference type="InterPro" id="IPR009003">
    <property type="entry name" value="Peptidase_S1_PA"/>
</dbReference>
<dbReference type="InterPro" id="IPR001940">
    <property type="entry name" value="Peptidase_S1C"/>
</dbReference>
<dbReference type="NCBIfam" id="TIGR02037">
    <property type="entry name" value="degP_htrA_DO"/>
    <property type="match status" value="1"/>
</dbReference>
<dbReference type="PANTHER" id="PTHR22939">
    <property type="entry name" value="SERINE PROTEASE FAMILY S1C HTRA-RELATED"/>
    <property type="match status" value="1"/>
</dbReference>
<dbReference type="PANTHER" id="PTHR22939:SF129">
    <property type="entry name" value="SERINE PROTEASE HTRA2, MITOCHONDRIAL"/>
    <property type="match status" value="1"/>
</dbReference>
<dbReference type="Pfam" id="PF13180">
    <property type="entry name" value="PDZ_2"/>
    <property type="match status" value="1"/>
</dbReference>
<dbReference type="Pfam" id="PF17820">
    <property type="entry name" value="PDZ_6"/>
    <property type="match status" value="1"/>
</dbReference>
<dbReference type="Pfam" id="PF13365">
    <property type="entry name" value="Trypsin_2"/>
    <property type="match status" value="1"/>
</dbReference>
<dbReference type="PRINTS" id="PR00834">
    <property type="entry name" value="PROTEASES2C"/>
</dbReference>
<dbReference type="SMART" id="SM00228">
    <property type="entry name" value="PDZ"/>
    <property type="match status" value="2"/>
</dbReference>
<dbReference type="SUPFAM" id="SSF50156">
    <property type="entry name" value="PDZ domain-like"/>
    <property type="match status" value="2"/>
</dbReference>
<dbReference type="SUPFAM" id="SSF50494">
    <property type="entry name" value="Trypsin-like serine proteases"/>
    <property type="match status" value="1"/>
</dbReference>
<dbReference type="PROSITE" id="PS50106">
    <property type="entry name" value="PDZ"/>
    <property type="match status" value="2"/>
</dbReference>
<proteinExistence type="inferred from homology"/>
<sequence length="503" mass="54113">MVKKTFFTTLAAVSFSAALETALFFSGCGSSLWTTKAHANSVFSSLMQQQGFADIVSQVKPAVVSVQVKSNKKKKEWFFSDFFSTPGFDQLPDQHPLKKFFQDFYNRDKPSNKSLQRSHRLRPIAFGSGFFISSDGYIVTNNHVISDGTSYAVVLDDGTELNAKLIGTDPRTDLAVLKVNEKRKFSYVDFGDDSKLRVGDWVVAIGNPFGLGGTVTAGIVSARGRDIGTGVYDDFIQIDAAVNRGNSGGPTFDLNGKVVGVNTAIFSPSGGNVGIAFAIPAATAKQVVQQLIEKGLVQRGWLGVQIQPVTKEISDSIGLKEAKGALITDPLKGPAAKAGIKAGDVIISVNGEKINDVRDLAKRIANMSPGETVTLGVWKSGKEENIKVKLDSMPEDENMKDGSKYSNEHGNSDETLEDYGLIVAPSDDGVGLVVTDVDPDSDAADKGIRPGDVIVTVNNKSVKKVSDITDTIKNAQKLGRKAILLQVRTNDQNRFVALPIFKK</sequence>
<gene>
    <name type="primary">htrA</name>
    <name type="ordered locus">BH04770</name>
</gene>
<reference key="1">
    <citation type="journal article" date="1994" name="J. Clin. Microbiol.">
        <title>Detection of Rochalimaea henselae DNA in specimens from cat scratch disease patients by PCR.</title>
        <authorList>
            <person name="Anderson B."/>
            <person name="Sims K."/>
            <person name="Regnery R."/>
            <person name="Robinson L."/>
            <person name="Schmidt M.J."/>
            <person name="Goral S."/>
            <person name="Hager C."/>
            <person name="Edwards K."/>
        </authorList>
    </citation>
    <scope>NUCLEOTIDE SEQUENCE [GENOMIC DNA]</scope>
    <source>
        <strain>ATCC 49882 / DSM 28221 / CCUG 30454 / Houston 1</strain>
    </source>
</reference>
<reference key="2">
    <citation type="journal article" date="2004" name="Proc. Natl. Acad. Sci. U.S.A.">
        <title>The louse-borne human pathogen Bartonella quintana is a genomic derivative of the zoonotic agent Bartonella henselae.</title>
        <authorList>
            <person name="Alsmark U.C.M."/>
            <person name="Frank A.C."/>
            <person name="Karlberg E.O."/>
            <person name="Legault B.-A."/>
            <person name="Ardell D.H."/>
            <person name="Canbaeck B."/>
            <person name="Eriksson A.-S."/>
            <person name="Naeslund A.K."/>
            <person name="Handley S.A."/>
            <person name="Huvet M."/>
            <person name="La Scola B."/>
            <person name="Holmberg M."/>
            <person name="Andersson S.G.E."/>
        </authorList>
    </citation>
    <scope>NUCLEOTIDE SEQUENCE [LARGE SCALE GENOMIC DNA]</scope>
    <source>
        <strain>ATCC 49882 / DSM 28221 / CCUG 30454 / Houston 1</strain>
    </source>
</reference>
<name>DEGPL_BARHE</name>
<feature type="signal peptide" evidence="2">
    <location>
        <begin position="1"/>
        <end position="18"/>
    </location>
</feature>
<feature type="chain" id="PRO_0000026923" description="Probable periplasmic serine endoprotease DegP-like">
    <location>
        <begin position="19"/>
        <end position="503"/>
    </location>
</feature>
<feature type="domain" description="PDZ 1" evidence="3">
    <location>
        <begin position="286"/>
        <end position="357"/>
    </location>
</feature>
<feature type="domain" description="PDZ 2" evidence="3">
    <location>
        <begin position="419"/>
        <end position="466"/>
    </location>
</feature>
<feature type="active site" description="Charge relay system" evidence="2">
    <location>
        <position position="143"/>
    </location>
</feature>
<feature type="active site" description="Charge relay system" evidence="2">
    <location>
        <position position="173"/>
    </location>
</feature>
<feature type="active site" description="Charge relay system" evidence="2">
    <location>
        <position position="247"/>
    </location>
</feature>
<feature type="binding site" evidence="1">
    <location>
        <begin position="245"/>
        <end position="247"/>
    </location>
    <ligand>
        <name>substrate</name>
    </ligand>
</feature>
<feature type="binding site" evidence="1">
    <location>
        <begin position="302"/>
        <end position="306"/>
    </location>
    <ligand>
        <name>substrate</name>
    </ligand>
</feature>
<feature type="sequence conflict" description="In Ref. 1; AAA97430." evidence="4" ref="1">
    <original>KQ</original>
    <variation>NE</variation>
    <location>
        <begin position="285"/>
        <end position="286"/>
    </location>
</feature>
<feature type="sequence conflict" description="In Ref. 1; AAA97430." evidence="4" ref="1">
    <original>V</original>
    <variation>L</variation>
    <location>
        <position position="430"/>
    </location>
</feature>
<comment type="function">
    <text evidence="1">Could be efficient in the degradation of transiently denatured and unfolded proteins which accumulate in the periplasm following stress conditions.</text>
</comment>
<comment type="catalytic activity">
    <reaction>
        <text>Acts on substrates that are at least partially unfolded. The cleavage site P1 residue is normally between a pair of hydrophobic residues, such as Val-|-Val.</text>
        <dbReference type="EC" id="3.4.21.107"/>
    </reaction>
</comment>
<comment type="subcellular location">
    <subcellularLocation>
        <location evidence="4">Periplasm</location>
    </subcellularLocation>
</comment>
<comment type="similarity">
    <text evidence="4">Belongs to the peptidase S1C family.</text>
</comment>
<organism>
    <name type="scientific">Bartonella henselae (strain ATCC 49882 / DSM 28221 / CCUG 30454 / Houston 1)</name>
    <name type="common">Rochalimaea henselae</name>
    <dbReference type="NCBI Taxonomy" id="283166"/>
    <lineage>
        <taxon>Bacteria</taxon>
        <taxon>Pseudomonadati</taxon>
        <taxon>Pseudomonadota</taxon>
        <taxon>Alphaproteobacteria</taxon>
        <taxon>Hyphomicrobiales</taxon>
        <taxon>Bartonellaceae</taxon>
        <taxon>Bartonella</taxon>
    </lineage>
</organism>
<keyword id="KW-0378">Hydrolase</keyword>
<keyword id="KW-0574">Periplasm</keyword>
<keyword id="KW-0645">Protease</keyword>
<keyword id="KW-0677">Repeat</keyword>
<keyword id="KW-0720">Serine protease</keyword>
<keyword id="KW-0732">Signal</keyword>
<keyword id="KW-0346">Stress response</keyword>
<protein>
    <recommendedName>
        <fullName>Probable periplasmic serine endoprotease DegP-like</fullName>
        <ecNumber>3.4.21.107</ecNumber>
    </recommendedName>
    <alternativeName>
        <fullName>Antigen HtrA</fullName>
    </alternativeName>
    <alternativeName>
        <fullName>Protease Do</fullName>
    </alternativeName>
</protein>
<accession>P54925</accession>
<accession>Q6G491</accession>